<sequence length="363" mass="40400">MKESVIRKLEGLLERNEEVLALLGDASVIADQDRFRALSKEYSQLEEVVAGFKAYQQAQADLDSAKEMLEEDDAEMREMAQEEMKAAKAELERLESELQILLLPKDPNDDTNAFIEIRAGAGGDEAAIFAGDLFRMYSRYAEANRWQMEVMSCNEGEHGGFKEIIVKVSGEGAYGKLKFESGGHRVQRVPETESQGRVHTSAVTVVVMHEVPEAEAISINPADLKVDTFRSSGAGGQHVNKTDSAIRITHIPTGIVVECQDQRSQHKNRAQAMSVLAARIQAVEDEKRRSAEESTRRSLVASGDRSERVRTYNFPQGRVSEHRINLTLYRLNEVMEGDLDAILTPLMQEHQADLLAALADEQG</sequence>
<protein>
    <recommendedName>
        <fullName evidence="1">Peptide chain release factor 1</fullName>
        <shortName evidence="1">RF-1</shortName>
    </recommendedName>
</protein>
<keyword id="KW-0963">Cytoplasm</keyword>
<keyword id="KW-0488">Methylation</keyword>
<keyword id="KW-0648">Protein biosynthesis</keyword>
<dbReference type="EMBL" id="CP000503">
    <property type="protein sequence ID" value="ABM26186.1"/>
    <property type="molecule type" value="Genomic_DNA"/>
</dbReference>
<dbReference type="RefSeq" id="WP_011790630.1">
    <property type="nucleotide sequence ID" value="NC_008750.1"/>
</dbReference>
<dbReference type="SMR" id="A1RNE1"/>
<dbReference type="KEGG" id="shw:Sputw3181_3374"/>
<dbReference type="HOGENOM" id="CLU_036856_0_1_6"/>
<dbReference type="Proteomes" id="UP000002597">
    <property type="component" value="Chromosome"/>
</dbReference>
<dbReference type="GO" id="GO:0005737">
    <property type="term" value="C:cytoplasm"/>
    <property type="evidence" value="ECO:0007669"/>
    <property type="project" value="UniProtKB-SubCell"/>
</dbReference>
<dbReference type="GO" id="GO:0016149">
    <property type="term" value="F:translation release factor activity, codon specific"/>
    <property type="evidence" value="ECO:0007669"/>
    <property type="project" value="UniProtKB-UniRule"/>
</dbReference>
<dbReference type="FunFam" id="3.30.160.20:FF:000004">
    <property type="entry name" value="Peptide chain release factor 1"/>
    <property type="match status" value="1"/>
</dbReference>
<dbReference type="FunFam" id="3.30.70.1660:FF:000002">
    <property type="entry name" value="Peptide chain release factor 1"/>
    <property type="match status" value="1"/>
</dbReference>
<dbReference type="FunFam" id="3.30.70.1660:FF:000004">
    <property type="entry name" value="Peptide chain release factor 1"/>
    <property type="match status" value="1"/>
</dbReference>
<dbReference type="Gene3D" id="3.30.160.20">
    <property type="match status" value="1"/>
</dbReference>
<dbReference type="Gene3D" id="3.30.70.1660">
    <property type="match status" value="2"/>
</dbReference>
<dbReference type="Gene3D" id="6.10.140.1950">
    <property type="match status" value="1"/>
</dbReference>
<dbReference type="HAMAP" id="MF_00093">
    <property type="entry name" value="Rel_fac_1"/>
    <property type="match status" value="1"/>
</dbReference>
<dbReference type="InterPro" id="IPR005139">
    <property type="entry name" value="PCRF"/>
</dbReference>
<dbReference type="InterPro" id="IPR000352">
    <property type="entry name" value="Pep_chain_release_fac_I"/>
</dbReference>
<dbReference type="InterPro" id="IPR045853">
    <property type="entry name" value="Pep_chain_release_fac_I_sf"/>
</dbReference>
<dbReference type="InterPro" id="IPR050057">
    <property type="entry name" value="Prokaryotic/Mito_RF"/>
</dbReference>
<dbReference type="InterPro" id="IPR004373">
    <property type="entry name" value="RF-1"/>
</dbReference>
<dbReference type="NCBIfam" id="TIGR00019">
    <property type="entry name" value="prfA"/>
    <property type="match status" value="1"/>
</dbReference>
<dbReference type="NCBIfam" id="NF001859">
    <property type="entry name" value="PRK00591.1"/>
    <property type="match status" value="1"/>
</dbReference>
<dbReference type="PANTHER" id="PTHR43804">
    <property type="entry name" value="LD18447P"/>
    <property type="match status" value="1"/>
</dbReference>
<dbReference type="PANTHER" id="PTHR43804:SF7">
    <property type="entry name" value="LD18447P"/>
    <property type="match status" value="1"/>
</dbReference>
<dbReference type="Pfam" id="PF03462">
    <property type="entry name" value="PCRF"/>
    <property type="match status" value="1"/>
</dbReference>
<dbReference type="Pfam" id="PF00472">
    <property type="entry name" value="RF-1"/>
    <property type="match status" value="1"/>
</dbReference>
<dbReference type="SMART" id="SM00937">
    <property type="entry name" value="PCRF"/>
    <property type="match status" value="1"/>
</dbReference>
<dbReference type="SUPFAM" id="SSF75620">
    <property type="entry name" value="Release factor"/>
    <property type="match status" value="1"/>
</dbReference>
<dbReference type="PROSITE" id="PS00745">
    <property type="entry name" value="RF_PROK_I"/>
    <property type="match status" value="1"/>
</dbReference>
<feature type="chain" id="PRO_1000004952" description="Peptide chain release factor 1">
    <location>
        <begin position="1"/>
        <end position="363"/>
    </location>
</feature>
<feature type="region of interest" description="Disordered" evidence="2">
    <location>
        <begin position="284"/>
        <end position="306"/>
    </location>
</feature>
<feature type="compositionally biased region" description="Basic and acidic residues" evidence="2">
    <location>
        <begin position="284"/>
        <end position="296"/>
    </location>
</feature>
<feature type="modified residue" description="N5-methylglutamine" evidence="1">
    <location>
        <position position="237"/>
    </location>
</feature>
<proteinExistence type="inferred from homology"/>
<gene>
    <name evidence="1" type="primary">prfA</name>
    <name type="ordered locus">Sputw3181_3374</name>
</gene>
<organism>
    <name type="scientific">Shewanella sp. (strain W3-18-1)</name>
    <dbReference type="NCBI Taxonomy" id="351745"/>
    <lineage>
        <taxon>Bacteria</taxon>
        <taxon>Pseudomonadati</taxon>
        <taxon>Pseudomonadota</taxon>
        <taxon>Gammaproteobacteria</taxon>
        <taxon>Alteromonadales</taxon>
        <taxon>Shewanellaceae</taxon>
        <taxon>Shewanella</taxon>
    </lineage>
</organism>
<reference key="1">
    <citation type="submission" date="2006-12" db="EMBL/GenBank/DDBJ databases">
        <title>Complete sequence of Shewanella sp. W3-18-1.</title>
        <authorList>
            <consortium name="US DOE Joint Genome Institute"/>
            <person name="Copeland A."/>
            <person name="Lucas S."/>
            <person name="Lapidus A."/>
            <person name="Barry K."/>
            <person name="Detter J.C."/>
            <person name="Glavina del Rio T."/>
            <person name="Hammon N."/>
            <person name="Israni S."/>
            <person name="Dalin E."/>
            <person name="Tice H."/>
            <person name="Pitluck S."/>
            <person name="Chain P."/>
            <person name="Malfatti S."/>
            <person name="Shin M."/>
            <person name="Vergez L."/>
            <person name="Schmutz J."/>
            <person name="Larimer F."/>
            <person name="Land M."/>
            <person name="Hauser L."/>
            <person name="Kyrpides N."/>
            <person name="Lykidis A."/>
            <person name="Tiedje J."/>
            <person name="Richardson P."/>
        </authorList>
    </citation>
    <scope>NUCLEOTIDE SEQUENCE [LARGE SCALE GENOMIC DNA]</scope>
    <source>
        <strain>W3-18-1</strain>
    </source>
</reference>
<evidence type="ECO:0000255" key="1">
    <source>
        <dbReference type="HAMAP-Rule" id="MF_00093"/>
    </source>
</evidence>
<evidence type="ECO:0000256" key="2">
    <source>
        <dbReference type="SAM" id="MobiDB-lite"/>
    </source>
</evidence>
<accession>A1RNE1</accession>
<name>RF1_SHESW</name>
<comment type="function">
    <text evidence="1">Peptide chain release factor 1 directs the termination of translation in response to the peptide chain termination codons UAG and UAA.</text>
</comment>
<comment type="subcellular location">
    <subcellularLocation>
        <location evidence="1">Cytoplasm</location>
    </subcellularLocation>
</comment>
<comment type="PTM">
    <text evidence="1">Methylated by PrmC. Methylation increases the termination efficiency of RF1.</text>
</comment>
<comment type="similarity">
    <text evidence="1">Belongs to the prokaryotic/mitochondrial release factor family.</text>
</comment>